<comment type="cofactor">
    <cofactor evidence="2">
        <name>Mg(2+)</name>
        <dbReference type="ChEBI" id="CHEBI:18420"/>
    </cofactor>
    <text evidence="2">Binds 1 Mg(2+) ion per subunit.</text>
</comment>
<comment type="subunit">
    <text evidence="2">Homodimer.</text>
</comment>
<comment type="similarity">
    <text evidence="3">Belongs to the methyltransferase superfamily. Type-7 methyltransferase family.</text>
</comment>
<feature type="chain" id="PRO_0000333026" description="Probable S-adenosylmethionine-dependent methyltransferase At5g37970">
    <location>
        <begin position="1"/>
        <end position="362"/>
    </location>
</feature>
<feature type="binding site" evidence="1">
    <location>
        <position position="19"/>
    </location>
    <ligand>
        <name>S-adenosyl-L-homocysteine</name>
        <dbReference type="ChEBI" id="CHEBI:57856"/>
    </ligand>
</feature>
<feature type="binding site" evidence="1">
    <location>
        <position position="66"/>
    </location>
    <ligand>
        <name>S-adenosyl-L-homocysteine</name>
        <dbReference type="ChEBI" id="CHEBI:57856"/>
    </ligand>
</feature>
<feature type="binding site" evidence="1">
    <location>
        <position position="71"/>
    </location>
    <ligand>
        <name>S-adenosyl-L-homocysteine</name>
        <dbReference type="ChEBI" id="CHEBI:57856"/>
    </ligand>
</feature>
<feature type="binding site" evidence="1">
    <location>
        <position position="107"/>
    </location>
    <ligand>
        <name>S-adenosyl-L-homocysteine</name>
        <dbReference type="ChEBI" id="CHEBI:57856"/>
    </ligand>
</feature>
<feature type="binding site" evidence="1">
    <location>
        <position position="136"/>
    </location>
    <ligand>
        <name>S-adenosyl-L-homocysteine</name>
        <dbReference type="ChEBI" id="CHEBI:57856"/>
    </ligand>
</feature>
<feature type="binding site" evidence="1">
    <location>
        <position position="137"/>
    </location>
    <ligand>
        <name>S-adenosyl-L-homocysteine</name>
        <dbReference type="ChEBI" id="CHEBI:57856"/>
    </ligand>
</feature>
<feature type="binding site" evidence="2">
    <location>
        <position position="175"/>
    </location>
    <ligand>
        <name>Mg(2+)</name>
        <dbReference type="ChEBI" id="CHEBI:18420"/>
    </ligand>
</feature>
<feature type="binding site" evidence="2">
    <location>
        <position position="261"/>
    </location>
    <ligand>
        <name>Mg(2+)</name>
        <dbReference type="ChEBI" id="CHEBI:18420"/>
    </ligand>
</feature>
<feature type="binding site" evidence="2">
    <location>
        <position position="263"/>
    </location>
    <ligand>
        <name>Mg(2+)</name>
        <dbReference type="ChEBI" id="CHEBI:18420"/>
    </ligand>
</feature>
<organism>
    <name type="scientific">Arabidopsis thaliana</name>
    <name type="common">Mouse-ear cress</name>
    <dbReference type="NCBI Taxonomy" id="3702"/>
    <lineage>
        <taxon>Eukaryota</taxon>
        <taxon>Viridiplantae</taxon>
        <taxon>Streptophyta</taxon>
        <taxon>Embryophyta</taxon>
        <taxon>Tracheophyta</taxon>
        <taxon>Spermatophyta</taxon>
        <taxon>Magnoliopsida</taxon>
        <taxon>eudicotyledons</taxon>
        <taxon>Gunneridae</taxon>
        <taxon>Pentapetalae</taxon>
        <taxon>rosids</taxon>
        <taxon>malvids</taxon>
        <taxon>Brassicales</taxon>
        <taxon>Brassicaceae</taxon>
        <taxon>Camelineae</taxon>
        <taxon>Arabidopsis</taxon>
    </lineage>
</organism>
<proteinExistence type="inferred from homology"/>
<keyword id="KW-0460">Magnesium</keyword>
<keyword id="KW-0479">Metal-binding</keyword>
<keyword id="KW-0489">Methyltransferase</keyword>
<keyword id="KW-1185">Reference proteome</keyword>
<keyword id="KW-0949">S-adenosyl-L-methionine</keyword>
<keyword id="KW-0808">Transferase</keyword>
<protein>
    <recommendedName>
        <fullName>Probable S-adenosylmethionine-dependent methyltransferase At5g37970</fullName>
        <ecNumber>2.1.1.-</ecNumber>
    </recommendedName>
</protein>
<evidence type="ECO:0000250" key="1">
    <source>
        <dbReference type="UniProtKB" id="B2KPR3"/>
    </source>
</evidence>
<evidence type="ECO:0000250" key="2">
    <source>
        <dbReference type="UniProtKB" id="Q9FLN8"/>
    </source>
</evidence>
<evidence type="ECO:0000305" key="3"/>
<gene>
    <name type="ordered locus">At5g37970</name>
    <name type="ORF">K18L3.130</name>
</gene>
<dbReference type="EC" id="2.1.1.-"/>
<dbReference type="EMBL" id="AB012241">
    <property type="protein sequence ID" value="BAB09042.1"/>
    <property type="molecule type" value="Genomic_DNA"/>
</dbReference>
<dbReference type="EMBL" id="CP002688">
    <property type="protein sequence ID" value="AED94253.2"/>
    <property type="molecule type" value="Genomic_DNA"/>
</dbReference>
<dbReference type="RefSeq" id="NP_198613.2">
    <property type="nucleotide sequence ID" value="NM_123156.2"/>
</dbReference>
<dbReference type="SMR" id="Q9FKD0"/>
<dbReference type="STRING" id="3702.Q9FKD0"/>
<dbReference type="iPTMnet" id="Q9FKD0"/>
<dbReference type="PaxDb" id="3702-AT5G37970.1"/>
<dbReference type="EnsemblPlants" id="AT5G37970.1">
    <property type="protein sequence ID" value="AT5G37970.1"/>
    <property type="gene ID" value="AT5G37970"/>
</dbReference>
<dbReference type="GeneID" id="833776"/>
<dbReference type="Gramene" id="AT5G37970.1">
    <property type="protein sequence ID" value="AT5G37970.1"/>
    <property type="gene ID" value="AT5G37970"/>
</dbReference>
<dbReference type="KEGG" id="ath:AT5G37970"/>
<dbReference type="Araport" id="AT5G37970"/>
<dbReference type="TAIR" id="AT5G37970"/>
<dbReference type="eggNOG" id="ENOG502QUIN">
    <property type="taxonomic scope" value="Eukaryota"/>
</dbReference>
<dbReference type="HOGENOM" id="CLU_019628_1_1_1"/>
<dbReference type="InParanoid" id="Q9FKD0"/>
<dbReference type="OMA" id="MEEISHP"/>
<dbReference type="PhylomeDB" id="Q9FKD0"/>
<dbReference type="BioCyc" id="ARA:AT5G37970-MONOMER"/>
<dbReference type="PRO" id="PR:Q9FKD0"/>
<dbReference type="Proteomes" id="UP000006548">
    <property type="component" value="Chromosome 5"/>
</dbReference>
<dbReference type="ExpressionAtlas" id="Q9FKD0">
    <property type="expression patterns" value="baseline and differential"/>
</dbReference>
<dbReference type="GO" id="GO:0046872">
    <property type="term" value="F:metal ion binding"/>
    <property type="evidence" value="ECO:0007669"/>
    <property type="project" value="UniProtKB-KW"/>
</dbReference>
<dbReference type="GO" id="GO:0008168">
    <property type="term" value="F:methyltransferase activity"/>
    <property type="evidence" value="ECO:0007669"/>
    <property type="project" value="UniProtKB-KW"/>
</dbReference>
<dbReference type="GO" id="GO:0032259">
    <property type="term" value="P:methylation"/>
    <property type="evidence" value="ECO:0007669"/>
    <property type="project" value="UniProtKB-KW"/>
</dbReference>
<dbReference type="Gene3D" id="1.10.1200.270">
    <property type="entry name" value="Methyltransferase, alpha-helical capping domain"/>
    <property type="match status" value="1"/>
</dbReference>
<dbReference type="Gene3D" id="3.40.50.150">
    <property type="entry name" value="Vaccinia Virus protein VP39"/>
    <property type="match status" value="1"/>
</dbReference>
<dbReference type="InterPro" id="IPR005299">
    <property type="entry name" value="MeTrfase_7"/>
</dbReference>
<dbReference type="InterPro" id="IPR042086">
    <property type="entry name" value="MeTrfase_capping"/>
</dbReference>
<dbReference type="InterPro" id="IPR029063">
    <property type="entry name" value="SAM-dependent_MTases_sf"/>
</dbReference>
<dbReference type="PANTHER" id="PTHR31009">
    <property type="entry name" value="S-ADENOSYL-L-METHIONINE:CARBOXYL METHYLTRANSFERASE FAMILY PROTEIN"/>
    <property type="match status" value="1"/>
</dbReference>
<dbReference type="Pfam" id="PF03492">
    <property type="entry name" value="Methyltransf_7"/>
    <property type="match status" value="1"/>
</dbReference>
<dbReference type="SUPFAM" id="SSF53335">
    <property type="entry name" value="S-adenosyl-L-methionine-dependent methyltransferases"/>
    <property type="match status" value="1"/>
</dbReference>
<accession>Q9FKD0</accession>
<accession>F4K8P4</accession>
<name>MT797_ARATH</name>
<sequence length="362" mass="41414">MPTFPQSFPMNGGDGPHSYIHNSSYQKVAIDGVKERTSEAILEKLDLEFLNRNSEENILRIVDFGCSIGPNTFDVVQNIIDTVKQKRLKENKTYIGAPLEFQVCFNDQPNNDFNTLFRTQPFFSRKEYFSVGVPGSFHGRVLPKNSLHIGHTSYTLHWLSNVPQHVCDKKSPALNKSYIQCNNLVDEVTKAYKIQFRKDFGGFLEARAEELVSGGLMILSGQCLPDGIPKALTWQGVVIDMIGDCLMDLAKLGITSKEKIELFSLPTYIPHISEFKANIEQNENFNVETMEEISHPMDYMPLTNDFITSMFRAILNTIIEEHFGEGVVNELFSRLAKRLDKYPIDFKRCKKYVNYFIVLKRK</sequence>
<reference key="1">
    <citation type="journal article" date="1998" name="DNA Res.">
        <title>Structural analysis of Arabidopsis thaliana chromosome 5. VI. Sequence features of the regions of 1,367,185 bp covered by 19 physically assigned P1 and TAC clones.</title>
        <authorList>
            <person name="Kotani H."/>
            <person name="Nakamura Y."/>
            <person name="Sato S."/>
            <person name="Asamizu E."/>
            <person name="Kaneko T."/>
            <person name="Miyajima N."/>
            <person name="Tabata S."/>
        </authorList>
    </citation>
    <scope>NUCLEOTIDE SEQUENCE [LARGE SCALE GENOMIC DNA]</scope>
    <source>
        <strain>cv. Columbia</strain>
    </source>
</reference>
<reference key="2">
    <citation type="journal article" date="2017" name="Plant J.">
        <title>Araport11: a complete reannotation of the Arabidopsis thaliana reference genome.</title>
        <authorList>
            <person name="Cheng C.Y."/>
            <person name="Krishnakumar V."/>
            <person name="Chan A.P."/>
            <person name="Thibaud-Nissen F."/>
            <person name="Schobel S."/>
            <person name="Town C.D."/>
        </authorList>
    </citation>
    <scope>GENOME REANNOTATION</scope>
    <source>
        <strain>cv. Columbia</strain>
    </source>
</reference>